<reference key="1">
    <citation type="journal article" date="1985" name="Nucleic Acids Res.">
        <title>Molecular cloning and nucleotide sequence of a developmentally regulated gene from the cyanobacterium Calothrix PCC 7601: a gas vesicle protein gene.</title>
        <authorList>
            <person name="Tandeau de Marsac N."/>
            <person name="Mazel D."/>
            <person name="Bryant D.A."/>
            <person name="Houmard J."/>
        </authorList>
    </citation>
    <scope>NUCLEOTIDE SEQUENCE [GENOMIC DNA]</scope>
    <source>
        <strain>UTEX 481 / PCC 7601 / SAG 1410-2</strain>
    </source>
</reference>
<reference key="2">
    <citation type="journal article" date="1987" name="Gene">
        <title>A developmentally regulated gvpABC operon is involved in the formation of gas vesicles in the cyanobacterium Calothrix 7601.</title>
        <authorList>
            <person name="Damerval T."/>
            <person name="Houmard J."/>
            <person name="Guglielmi G."/>
            <person name="Csizar K."/>
            <person name="Tandeau de Marsac N."/>
        </authorList>
    </citation>
    <scope>NUCLEOTIDE SEQUENCE [GENOMIC DNA] (GVPB/GVPA2)</scope>
    <scope>INDUCTION DURING HORMOGONIA DIFFERENTIATION</scope>
    <source>
        <strain>UTEX 481 / PCC 7601 / SAG 1410-2</strain>
    </source>
</reference>
<reference key="3">
    <citation type="journal article" date="1986" name="Biochem. J.">
        <title>Complete amino acid sequence of cyanobacterial gas-vesicle protein indicates a 70-residue molecule that corresponds in size to the crystallographic unit cell.</title>
        <authorList>
            <person name="Hayes P.K."/>
            <person name="Walsby A.E."/>
            <person name="Walker J.E."/>
        </authorList>
    </citation>
    <scope>PROTEIN SEQUENCE OF 2-57</scope>
    <scope>SUBCELLULAR LOCATION</scope>
    <scope>INDUCTION DURING HORMOGONIA DIFFERENTIATION</scope>
    <source>
        <strain>UTEX 481 / PCC 7601 / SAG 1410-2</strain>
    </source>
</reference>
<reference key="4">
    <citation type="journal article" date="1991" name="Plant Cell">
        <title>Hormogonium Differentiation in the Cyanobacterium Calothrix: A Photoregulated Developmental Process.</title>
        <authorList>
            <person name="Damerval T."/>
            <person name="Guglielmi G."/>
            <person name="Houmard J."/>
            <person name="De Marsac N.T."/>
        </authorList>
    </citation>
    <scope>INDUCTION DURING HORMOGONIA DIFFERENTIATION</scope>
    <source>
        <strain>UTEX 481 / PCC 7601 / SAG 1410-2</strain>
    </source>
</reference>
<feature type="initiator methionine" description="Removed" evidence="5">
    <location>
        <position position="1"/>
    </location>
</feature>
<feature type="chain" id="PRO_0000199984" description="Gas vesicle protein A">
    <location>
        <begin position="2"/>
        <end position="71"/>
    </location>
</feature>
<feature type="region of interest" description="Alpha helix 1" evidence="1">
    <location>
        <begin position="12"/>
        <end position="22"/>
    </location>
</feature>
<feature type="region of interest" description="Beta-strand 1" evidence="1">
    <location>
        <begin position="26"/>
        <end position="34"/>
    </location>
</feature>
<feature type="region of interest" description="Beta turn" evidence="1">
    <location>
        <begin position="35"/>
        <end position="37"/>
    </location>
</feature>
<feature type="region of interest" description="Beta-strand 2" evidence="1">
    <location>
        <begin position="38"/>
        <end position="46"/>
    </location>
</feature>
<feature type="region of interest" description="Alpha helix 2" evidence="1">
    <location>
        <begin position="51"/>
        <end position="70"/>
    </location>
</feature>
<feature type="sequence variant">
    <original>D</original>
    <variation>N</variation>
    <location>
        <position position="27"/>
    </location>
</feature>
<gene>
    <name evidence="2 7" type="primary">gvpA1</name>
    <name evidence="8" type="synonym">gvpA</name>
</gene>
<gene>
    <name evidence="2 7" type="primary">gvpA2</name>
    <name evidence="9" type="synonym">gvpB</name>
</gene>
<evidence type="ECO:0000250" key="1">
    <source>
        <dbReference type="UniProtKB" id="P08958"/>
    </source>
</evidence>
<evidence type="ECO:0000255" key="2">
    <source>
        <dbReference type="HAMAP-Rule" id="MF_00576"/>
    </source>
</evidence>
<evidence type="ECO:0000269" key="3">
    <source>
    </source>
</evidence>
<evidence type="ECO:0000269" key="4">
    <source>
    </source>
</evidence>
<evidence type="ECO:0000269" key="5">
    <source>
    </source>
</evidence>
<evidence type="ECO:0000269" key="6">
    <source>
    </source>
</evidence>
<evidence type="ECO:0000303" key="7">
    <source>
    </source>
</evidence>
<evidence type="ECO:0000303" key="8">
    <source>
    </source>
</evidence>
<evidence type="ECO:0000303" key="9">
    <source>
    </source>
</evidence>
<sequence length="71" mass="7515">MAVEKTNSSSSLAEVIDRILDKGIVVDAWVRVSLVGIELLAIEARIVIASVETYLKYAEAVGLTQSAAVPA</sequence>
<organism>
    <name type="scientific">Microchaete diplosiphon</name>
    <name type="common">Fremyella diplosiphon</name>
    <dbReference type="NCBI Taxonomy" id="1197"/>
    <lineage>
        <taxon>Bacteria</taxon>
        <taxon>Bacillati</taxon>
        <taxon>Cyanobacteriota</taxon>
        <taxon>Cyanophyceae</taxon>
        <taxon>Nostocales</taxon>
        <taxon>Rivulariaceae</taxon>
        <taxon>Microchaete</taxon>
    </lineage>
</organism>
<accession>P07060</accession>
<comment type="function">
    <text evidence="2">Gas vesicles are hollow, gas filled proteinaceous nanostructures found in some microorganisms. During planktonic growth they allow positioning of the organism at a favorable depth for light or nutrient acquisition. GvpA forms the protein shell.</text>
</comment>
<comment type="subunit">
    <text evidence="2">The gas vesicle shell is 2 nm thick and consists of a single layer of this protein. It forms helical ribs nearly perpendicular to the long axis of the vesicle.</text>
</comment>
<comment type="subcellular location">
    <subcellularLocation>
        <location evidence="2 5">Gas vesicle shell</location>
    </subcellularLocation>
</comment>
<comment type="induction">
    <text evidence="3 4 5 6">Gas vesicle formation in this filamentous organism is restricted to specialized filaments called hormogonia which differentiate at the tapering ends of trichomes (PubMed:2997744). Transcribed during hormogonia differentiation in red light. Probably part of a gvpA1-gvpA2-gvpC operon. Transcription is maximal after 6 hours, degradation of the larger transcripts occurs rapidly between 9 and 12 hours or upon a shift to green light. All transcripts disappear between 12 and 24 hours (PubMed:12324595, PubMed:3111941). Gas vesicle formation is induced during hormogonia formation (growth in red light for 1 day) (at protein level) (PubMed:3098234).</text>
</comment>
<comment type="similarity">
    <text evidence="2">Belongs to the gas vesicle GvpA family.</text>
</comment>
<name>GVPA_MICDP</name>
<keyword id="KW-0903">Direct protein sequencing</keyword>
<keyword id="KW-0304">Gas vesicle</keyword>
<dbReference type="EMBL" id="X06085">
    <property type="protein sequence ID" value="CAA29468.1"/>
    <property type="molecule type" value="Genomic_DNA"/>
</dbReference>
<dbReference type="EMBL" id="X06085">
    <property type="protein sequence ID" value="CAA29467.1"/>
    <property type="molecule type" value="Genomic_DNA"/>
</dbReference>
<dbReference type="SMR" id="P07060"/>
<dbReference type="GO" id="GO:0033172">
    <property type="term" value="C:gas vesicle shell"/>
    <property type="evidence" value="ECO:0007669"/>
    <property type="project" value="UniProtKB-UniRule"/>
</dbReference>
<dbReference type="GO" id="GO:0012506">
    <property type="term" value="C:vesicle membrane"/>
    <property type="evidence" value="ECO:0007669"/>
    <property type="project" value="InterPro"/>
</dbReference>
<dbReference type="GO" id="GO:0005198">
    <property type="term" value="F:structural molecule activity"/>
    <property type="evidence" value="ECO:0007669"/>
    <property type="project" value="InterPro"/>
</dbReference>
<dbReference type="HAMAP" id="MF_00576">
    <property type="entry name" value="Gas_vesicle_A"/>
    <property type="match status" value="1"/>
</dbReference>
<dbReference type="InterPro" id="IPR000638">
    <property type="entry name" value="Gas-vesicle_GvpA-like"/>
</dbReference>
<dbReference type="InterPro" id="IPR047870">
    <property type="entry name" value="Gas_vesicle_GvpA"/>
</dbReference>
<dbReference type="InterPro" id="IPR050530">
    <property type="entry name" value="GvpA"/>
</dbReference>
<dbReference type="InterPro" id="IPR018493">
    <property type="entry name" value="GvpA-like_CS"/>
</dbReference>
<dbReference type="NCBIfam" id="NF006874">
    <property type="entry name" value="PRK09371.1"/>
    <property type="match status" value="1"/>
</dbReference>
<dbReference type="PANTHER" id="PTHR35344:SF4">
    <property type="entry name" value="GAS VESICLE PROTEIN A1"/>
    <property type="match status" value="1"/>
</dbReference>
<dbReference type="PANTHER" id="PTHR35344">
    <property type="entry name" value="GAS VESICLE STRUCTURAL PROTEIN 2-RELATED"/>
    <property type="match status" value="1"/>
</dbReference>
<dbReference type="Pfam" id="PF00741">
    <property type="entry name" value="Gas_vesicle"/>
    <property type="match status" value="1"/>
</dbReference>
<dbReference type="PROSITE" id="PS00234">
    <property type="entry name" value="GAS_VESICLE_A_1"/>
    <property type="match status" value="1"/>
</dbReference>
<dbReference type="PROSITE" id="PS00669">
    <property type="entry name" value="GAS_VESICLE_A_2"/>
    <property type="match status" value="1"/>
</dbReference>
<protein>
    <recommendedName>
        <fullName evidence="2">Gas vesicle protein A</fullName>
        <shortName evidence="8">GVP</shortName>
        <shortName evidence="2">GvpA</shortName>
    </recommendedName>
</protein>
<proteinExistence type="evidence at protein level"/>